<dbReference type="EC" id="4.98.1.1" evidence="1"/>
<dbReference type="EMBL" id="AE014075">
    <property type="protein sequence ID" value="AAN79073.1"/>
    <property type="molecule type" value="Genomic_DNA"/>
</dbReference>
<dbReference type="RefSeq" id="WP_001250114.1">
    <property type="nucleotide sequence ID" value="NZ_CP051263.1"/>
</dbReference>
<dbReference type="SMR" id="Q8FK83"/>
<dbReference type="STRING" id="199310.c0595"/>
<dbReference type="KEGG" id="ecc:c0595"/>
<dbReference type="eggNOG" id="COG0276">
    <property type="taxonomic scope" value="Bacteria"/>
</dbReference>
<dbReference type="HOGENOM" id="CLU_018884_0_0_6"/>
<dbReference type="BioCyc" id="ECOL199310:C0595-MONOMER"/>
<dbReference type="UniPathway" id="UPA00252">
    <property type="reaction ID" value="UER00325"/>
</dbReference>
<dbReference type="Proteomes" id="UP000001410">
    <property type="component" value="Chromosome"/>
</dbReference>
<dbReference type="GO" id="GO:0005737">
    <property type="term" value="C:cytoplasm"/>
    <property type="evidence" value="ECO:0007669"/>
    <property type="project" value="UniProtKB-SubCell"/>
</dbReference>
<dbReference type="GO" id="GO:0004325">
    <property type="term" value="F:ferrochelatase activity"/>
    <property type="evidence" value="ECO:0007669"/>
    <property type="project" value="UniProtKB-UniRule"/>
</dbReference>
<dbReference type="GO" id="GO:0046872">
    <property type="term" value="F:metal ion binding"/>
    <property type="evidence" value="ECO:0007669"/>
    <property type="project" value="UniProtKB-KW"/>
</dbReference>
<dbReference type="GO" id="GO:0006783">
    <property type="term" value="P:heme biosynthetic process"/>
    <property type="evidence" value="ECO:0007669"/>
    <property type="project" value="UniProtKB-UniRule"/>
</dbReference>
<dbReference type="CDD" id="cd00419">
    <property type="entry name" value="Ferrochelatase_C"/>
    <property type="match status" value="1"/>
</dbReference>
<dbReference type="CDD" id="cd03411">
    <property type="entry name" value="Ferrochelatase_N"/>
    <property type="match status" value="1"/>
</dbReference>
<dbReference type="FunFam" id="3.40.50.1400:FF:000004">
    <property type="entry name" value="Ferrochelatase"/>
    <property type="match status" value="1"/>
</dbReference>
<dbReference type="Gene3D" id="3.40.50.1400">
    <property type="match status" value="2"/>
</dbReference>
<dbReference type="HAMAP" id="MF_00323">
    <property type="entry name" value="Ferrochelatase"/>
    <property type="match status" value="1"/>
</dbReference>
<dbReference type="InterPro" id="IPR001015">
    <property type="entry name" value="Ferrochelatase"/>
</dbReference>
<dbReference type="InterPro" id="IPR019772">
    <property type="entry name" value="Ferrochelatase_AS"/>
</dbReference>
<dbReference type="InterPro" id="IPR033644">
    <property type="entry name" value="Ferrochelatase_C"/>
</dbReference>
<dbReference type="InterPro" id="IPR033659">
    <property type="entry name" value="Ferrochelatase_N"/>
</dbReference>
<dbReference type="NCBIfam" id="TIGR00109">
    <property type="entry name" value="hemH"/>
    <property type="match status" value="1"/>
</dbReference>
<dbReference type="PANTHER" id="PTHR11108">
    <property type="entry name" value="FERROCHELATASE"/>
    <property type="match status" value="1"/>
</dbReference>
<dbReference type="PANTHER" id="PTHR11108:SF1">
    <property type="entry name" value="FERROCHELATASE, MITOCHONDRIAL"/>
    <property type="match status" value="1"/>
</dbReference>
<dbReference type="Pfam" id="PF00762">
    <property type="entry name" value="Ferrochelatase"/>
    <property type="match status" value="1"/>
</dbReference>
<dbReference type="SUPFAM" id="SSF53800">
    <property type="entry name" value="Chelatase"/>
    <property type="match status" value="1"/>
</dbReference>
<dbReference type="PROSITE" id="PS00534">
    <property type="entry name" value="FERROCHELATASE"/>
    <property type="match status" value="1"/>
</dbReference>
<proteinExistence type="inferred from homology"/>
<gene>
    <name evidence="1" type="primary">hemH</name>
    <name type="ordered locus">c0595</name>
</gene>
<name>HEMH_ECOL6</name>
<feature type="chain" id="PRO_0000175139" description="Ferrochelatase">
    <location>
        <begin position="1"/>
        <end position="320"/>
    </location>
</feature>
<feature type="binding site" evidence="1">
    <location>
        <position position="194"/>
    </location>
    <ligand>
        <name>Fe cation</name>
        <dbReference type="ChEBI" id="CHEBI:24875"/>
    </ligand>
</feature>
<feature type="binding site" evidence="1">
    <location>
        <position position="275"/>
    </location>
    <ligand>
        <name>Fe cation</name>
        <dbReference type="ChEBI" id="CHEBI:24875"/>
    </ligand>
</feature>
<accession>Q8FK83</accession>
<evidence type="ECO:0000255" key="1">
    <source>
        <dbReference type="HAMAP-Rule" id="MF_00323"/>
    </source>
</evidence>
<organism>
    <name type="scientific">Escherichia coli O6:H1 (strain CFT073 / ATCC 700928 / UPEC)</name>
    <dbReference type="NCBI Taxonomy" id="199310"/>
    <lineage>
        <taxon>Bacteria</taxon>
        <taxon>Pseudomonadati</taxon>
        <taxon>Pseudomonadota</taxon>
        <taxon>Gammaproteobacteria</taxon>
        <taxon>Enterobacterales</taxon>
        <taxon>Enterobacteriaceae</taxon>
        <taxon>Escherichia</taxon>
    </lineage>
</organism>
<comment type="function">
    <text evidence="1">Catalyzes the ferrous insertion into protoporphyrin IX.</text>
</comment>
<comment type="catalytic activity">
    <reaction evidence="1">
        <text>heme b + 2 H(+) = protoporphyrin IX + Fe(2+)</text>
        <dbReference type="Rhea" id="RHEA:22584"/>
        <dbReference type="ChEBI" id="CHEBI:15378"/>
        <dbReference type="ChEBI" id="CHEBI:29033"/>
        <dbReference type="ChEBI" id="CHEBI:57306"/>
        <dbReference type="ChEBI" id="CHEBI:60344"/>
        <dbReference type="EC" id="4.98.1.1"/>
    </reaction>
</comment>
<comment type="pathway">
    <text evidence="1">Porphyrin-containing compound metabolism; protoheme biosynthesis; protoheme from protoporphyrin-IX: step 1/1.</text>
</comment>
<comment type="subunit">
    <text evidence="1">Monomer.</text>
</comment>
<comment type="subcellular location">
    <subcellularLocation>
        <location evidence="1">Cytoplasm</location>
    </subcellularLocation>
</comment>
<comment type="similarity">
    <text evidence="1">Belongs to the ferrochelatase family.</text>
</comment>
<protein>
    <recommendedName>
        <fullName evidence="1">Ferrochelatase</fullName>
        <ecNumber evidence="1">4.98.1.1</ecNumber>
    </recommendedName>
    <alternativeName>
        <fullName evidence="1">Heme synthase</fullName>
    </alternativeName>
    <alternativeName>
        <fullName evidence="1">Protoheme ferro-lyase</fullName>
    </alternativeName>
</protein>
<keyword id="KW-0963">Cytoplasm</keyword>
<keyword id="KW-0350">Heme biosynthesis</keyword>
<keyword id="KW-0408">Iron</keyword>
<keyword id="KW-0456">Lyase</keyword>
<keyword id="KW-0479">Metal-binding</keyword>
<keyword id="KW-0627">Porphyrin biosynthesis</keyword>
<keyword id="KW-1185">Reference proteome</keyword>
<sequence length="320" mass="35942">MRQTKTGILLANLGTPDAPTPEAVKRYLKQFLSDRRVVDTSRLLWWPLLRGVILPLRSPRVAKLYASVWMEGGSPLMVYSRQQQQALAQRLPETPVALGMSYGSPSLESAVDELLAEHVDHIVVLPLYPQYSCSTVGAVWDELARILARKRSIPGISFIRDYADNHDYINALANSVRASFAKHGEPDLLLLSYHGIPQRYADEGDDYPQRCRTTTRELASALEMAPEKVMMTFQSRFGREPWLMPYTDETLKMLGEKGVGHIQVMCPGFAADCLETLEEIAEQNREVFLGAGGKKYEYIPALNATPEHIEMMANLVAAYR</sequence>
<reference key="1">
    <citation type="journal article" date="2002" name="Proc. Natl. Acad. Sci. U.S.A.">
        <title>Extensive mosaic structure revealed by the complete genome sequence of uropathogenic Escherichia coli.</title>
        <authorList>
            <person name="Welch R.A."/>
            <person name="Burland V."/>
            <person name="Plunkett G. III"/>
            <person name="Redford P."/>
            <person name="Roesch P."/>
            <person name="Rasko D."/>
            <person name="Buckles E.L."/>
            <person name="Liou S.-R."/>
            <person name="Boutin A."/>
            <person name="Hackett J."/>
            <person name="Stroud D."/>
            <person name="Mayhew G.F."/>
            <person name="Rose D.J."/>
            <person name="Zhou S."/>
            <person name="Schwartz D.C."/>
            <person name="Perna N.T."/>
            <person name="Mobley H.L.T."/>
            <person name="Donnenberg M.S."/>
            <person name="Blattner F.R."/>
        </authorList>
    </citation>
    <scope>NUCLEOTIDE SEQUENCE [LARGE SCALE GENOMIC DNA]</scope>
    <source>
        <strain>CFT073 / ATCC 700928 / UPEC</strain>
    </source>
</reference>